<name>DXR_BLOFL</name>
<reference key="1">
    <citation type="journal article" date="2003" name="Proc. Natl. Acad. Sci. U.S.A.">
        <title>The genome sequence of Blochmannia floridanus: comparative analysis of reduced genomes.</title>
        <authorList>
            <person name="Gil R."/>
            <person name="Silva F.J."/>
            <person name="Zientz E."/>
            <person name="Delmotte F."/>
            <person name="Gonzalez-Candelas F."/>
            <person name="Latorre A."/>
            <person name="Rausell C."/>
            <person name="Kamerbeek J."/>
            <person name="Gadau J."/>
            <person name="Hoelldobler B."/>
            <person name="van Ham R.C.H.J."/>
            <person name="Gross R."/>
            <person name="Moya A."/>
        </authorList>
    </citation>
    <scope>NUCLEOTIDE SEQUENCE [LARGE SCALE GENOMIC DNA]</scope>
</reference>
<comment type="function">
    <text evidence="1">Catalyzes the NADPH-dependent rearrangement and reduction of 1-deoxy-D-xylulose-5-phosphate (DXP) to 2-C-methyl-D-erythritol 4-phosphate (MEP).</text>
</comment>
<comment type="catalytic activity">
    <reaction evidence="1">
        <text>2-C-methyl-D-erythritol 4-phosphate + NADP(+) = 1-deoxy-D-xylulose 5-phosphate + NADPH + H(+)</text>
        <dbReference type="Rhea" id="RHEA:13717"/>
        <dbReference type="ChEBI" id="CHEBI:15378"/>
        <dbReference type="ChEBI" id="CHEBI:57783"/>
        <dbReference type="ChEBI" id="CHEBI:57792"/>
        <dbReference type="ChEBI" id="CHEBI:58262"/>
        <dbReference type="ChEBI" id="CHEBI:58349"/>
        <dbReference type="EC" id="1.1.1.267"/>
    </reaction>
    <physiologicalReaction direction="right-to-left" evidence="1">
        <dbReference type="Rhea" id="RHEA:13719"/>
    </physiologicalReaction>
</comment>
<comment type="cofactor">
    <cofactor evidence="1">
        <name>Mg(2+)</name>
        <dbReference type="ChEBI" id="CHEBI:18420"/>
    </cofactor>
    <cofactor evidence="1">
        <name>Mn(2+)</name>
        <dbReference type="ChEBI" id="CHEBI:29035"/>
    </cofactor>
</comment>
<comment type="pathway">
    <text evidence="1">Isoprenoid biosynthesis; isopentenyl diphosphate biosynthesis via DXP pathway; isopentenyl diphosphate from 1-deoxy-D-xylulose 5-phosphate: step 1/6.</text>
</comment>
<comment type="subunit">
    <text evidence="1">Homodimer.</text>
</comment>
<comment type="similarity">
    <text evidence="1">Belongs to the DXR family.</text>
</comment>
<organism>
    <name type="scientific">Blochmanniella floridana</name>
    <dbReference type="NCBI Taxonomy" id="203907"/>
    <lineage>
        <taxon>Bacteria</taxon>
        <taxon>Pseudomonadati</taxon>
        <taxon>Pseudomonadota</taxon>
        <taxon>Gammaproteobacteria</taxon>
        <taxon>Enterobacterales</taxon>
        <taxon>Enterobacteriaceae</taxon>
        <taxon>ant endosymbionts</taxon>
        <taxon>Candidatus Blochmanniella</taxon>
    </lineage>
</organism>
<sequence>MISGAQQYRDKFAVRALVAHNDVAVMIEQCFLVSPQYVCMICEEVARNLKYKLVLMDKNNIQVLSGMKDACVLSALDAVDMVVSTMAGIARLQPIFSAIRVGKKILLANKETLVLSGQLFMTEVYKYNASVLPLDSEYNAIFQNLSVIYQKKLGQVSLSQYGICCIVLTDSGGVLYKITRTKLFKITPVQVYIHPNWSMGLKISVNSATVMNRVLEYIEAHHLFNVSSNEIEILLHTQTIIYATIRYSDGSVLAHFSTPDMKIFIAYAMAYLNKIKLNNISTYSKQYEIYNTYCGNNTLNLDILDTKNYPCLQTAIDASNHSQDSVIVLNADNEVTVEAFLCEMIAFIKIPNFIYRIMNTLNHFQEPSTIDDIIYIDHCIKETEIRYAIGN</sequence>
<protein>
    <recommendedName>
        <fullName evidence="1">1-deoxy-D-xylulose 5-phosphate reductoisomerase</fullName>
        <shortName evidence="1">DXP reductoisomerase</shortName>
        <ecNumber evidence="1">1.1.1.267</ecNumber>
    </recommendedName>
    <alternativeName>
        <fullName evidence="1">1-deoxyxylulose-5-phosphate reductoisomerase</fullName>
    </alternativeName>
    <alternativeName>
        <fullName evidence="1">2-C-methyl-D-erythritol 4-phosphate synthase</fullName>
    </alternativeName>
</protein>
<feature type="chain" id="PRO_0000163617" description="1-deoxy-D-xylulose 5-phosphate reductoisomerase">
    <location>
        <begin position="1"/>
        <end position="391"/>
    </location>
</feature>
<feature type="binding site" evidence="1">
    <location>
        <position position="109"/>
    </location>
    <ligand>
        <name>NADPH</name>
        <dbReference type="ChEBI" id="CHEBI:57783"/>
    </ligand>
</feature>
<feature type="binding site" evidence="1">
    <location>
        <position position="110"/>
    </location>
    <ligand>
        <name>1-deoxy-D-xylulose 5-phosphate</name>
        <dbReference type="ChEBI" id="CHEBI:57792"/>
    </ligand>
</feature>
<feature type="binding site" evidence="1">
    <location>
        <position position="111"/>
    </location>
    <ligand>
        <name>NADPH</name>
        <dbReference type="ChEBI" id="CHEBI:57783"/>
    </ligand>
</feature>
<feature type="binding site" evidence="1">
    <location>
        <position position="135"/>
    </location>
    <ligand>
        <name>Mn(2+)</name>
        <dbReference type="ChEBI" id="CHEBI:29035"/>
    </ligand>
</feature>
<feature type="binding site" evidence="1">
    <location>
        <position position="136"/>
    </location>
    <ligand>
        <name>1-deoxy-D-xylulose 5-phosphate</name>
        <dbReference type="ChEBI" id="CHEBI:57792"/>
    </ligand>
</feature>
<feature type="binding site" evidence="1">
    <location>
        <position position="137"/>
    </location>
    <ligand>
        <name>1-deoxy-D-xylulose 5-phosphate</name>
        <dbReference type="ChEBI" id="CHEBI:57792"/>
    </ligand>
</feature>
<feature type="binding site" evidence="1">
    <location>
        <position position="137"/>
    </location>
    <ligand>
        <name>Mn(2+)</name>
        <dbReference type="ChEBI" id="CHEBI:29035"/>
    </ligand>
</feature>
<feature type="binding site" evidence="1">
    <location>
        <position position="171"/>
    </location>
    <ligand>
        <name>1-deoxy-D-xylulose 5-phosphate</name>
        <dbReference type="ChEBI" id="CHEBI:57792"/>
    </ligand>
</feature>
<feature type="binding site" evidence="1">
    <location>
        <position position="194"/>
    </location>
    <ligand>
        <name>1-deoxy-D-xylulose 5-phosphate</name>
        <dbReference type="ChEBI" id="CHEBI:57792"/>
    </ligand>
</feature>
<feature type="binding site" evidence="1">
    <location>
        <position position="200"/>
    </location>
    <ligand>
        <name>NADPH</name>
        <dbReference type="ChEBI" id="CHEBI:57783"/>
    </ligand>
</feature>
<feature type="binding site" evidence="1">
    <location>
        <position position="207"/>
    </location>
    <ligand>
        <name>1-deoxy-D-xylulose 5-phosphate</name>
        <dbReference type="ChEBI" id="CHEBI:57792"/>
    </ligand>
</feature>
<feature type="binding site" evidence="1">
    <location>
        <position position="212"/>
    </location>
    <ligand>
        <name>1-deoxy-D-xylulose 5-phosphate</name>
        <dbReference type="ChEBI" id="CHEBI:57792"/>
    </ligand>
</feature>
<feature type="binding site" evidence="1">
    <location>
        <position position="213"/>
    </location>
    <ligand>
        <name>1-deoxy-D-xylulose 5-phosphate</name>
        <dbReference type="ChEBI" id="CHEBI:57792"/>
    </ligand>
</feature>
<feature type="binding site" evidence="1">
    <location>
        <position position="216"/>
    </location>
    <ligand>
        <name>1-deoxy-D-xylulose 5-phosphate</name>
        <dbReference type="ChEBI" id="CHEBI:57792"/>
    </ligand>
</feature>
<feature type="binding site" evidence="1">
    <location>
        <position position="216"/>
    </location>
    <ligand>
        <name>Mn(2+)</name>
        <dbReference type="ChEBI" id="CHEBI:29035"/>
    </ligand>
</feature>
<proteinExistence type="inferred from homology"/>
<gene>
    <name evidence="1" type="primary">dxr</name>
    <name type="ordered locus">Bfl275</name>
</gene>
<evidence type="ECO:0000255" key="1">
    <source>
        <dbReference type="HAMAP-Rule" id="MF_00183"/>
    </source>
</evidence>
<accession>Q7VRE2</accession>
<keyword id="KW-0414">Isoprene biosynthesis</keyword>
<keyword id="KW-0464">Manganese</keyword>
<keyword id="KW-0479">Metal-binding</keyword>
<keyword id="KW-0521">NADP</keyword>
<keyword id="KW-0560">Oxidoreductase</keyword>
<keyword id="KW-1185">Reference proteome</keyword>
<dbReference type="EC" id="1.1.1.267" evidence="1"/>
<dbReference type="EMBL" id="BX248583">
    <property type="protein sequence ID" value="CAD83346.1"/>
    <property type="molecule type" value="Genomic_DNA"/>
</dbReference>
<dbReference type="SMR" id="Q7VRE2"/>
<dbReference type="STRING" id="203907.Bfl275"/>
<dbReference type="KEGG" id="bfl:Bfl275"/>
<dbReference type="eggNOG" id="COG0743">
    <property type="taxonomic scope" value="Bacteria"/>
</dbReference>
<dbReference type="HOGENOM" id="CLU_035714_0_1_6"/>
<dbReference type="OrthoDB" id="9806546at2"/>
<dbReference type="UniPathway" id="UPA00056">
    <property type="reaction ID" value="UER00092"/>
</dbReference>
<dbReference type="Proteomes" id="UP000002192">
    <property type="component" value="Chromosome"/>
</dbReference>
<dbReference type="GO" id="GO:0030604">
    <property type="term" value="F:1-deoxy-D-xylulose-5-phosphate reductoisomerase activity"/>
    <property type="evidence" value="ECO:0007669"/>
    <property type="project" value="UniProtKB-UniRule"/>
</dbReference>
<dbReference type="GO" id="GO:0030145">
    <property type="term" value="F:manganese ion binding"/>
    <property type="evidence" value="ECO:0007669"/>
    <property type="project" value="TreeGrafter"/>
</dbReference>
<dbReference type="GO" id="GO:0070402">
    <property type="term" value="F:NADPH binding"/>
    <property type="evidence" value="ECO:0007669"/>
    <property type="project" value="InterPro"/>
</dbReference>
<dbReference type="GO" id="GO:0051484">
    <property type="term" value="P:isopentenyl diphosphate biosynthetic process, methylerythritol 4-phosphate pathway involved in terpenoid biosynthetic process"/>
    <property type="evidence" value="ECO:0007669"/>
    <property type="project" value="TreeGrafter"/>
</dbReference>
<dbReference type="Gene3D" id="1.10.1740.10">
    <property type="match status" value="1"/>
</dbReference>
<dbReference type="Gene3D" id="3.40.50.720">
    <property type="entry name" value="NAD(P)-binding Rossmann-like Domain"/>
    <property type="match status" value="1"/>
</dbReference>
<dbReference type="HAMAP" id="MF_00183">
    <property type="entry name" value="DXP_reductoisom"/>
    <property type="match status" value="1"/>
</dbReference>
<dbReference type="InterPro" id="IPR003821">
    <property type="entry name" value="DXP_reductoisomerase"/>
</dbReference>
<dbReference type="InterPro" id="IPR013644">
    <property type="entry name" value="DXP_reductoisomerase_C"/>
</dbReference>
<dbReference type="InterPro" id="IPR013512">
    <property type="entry name" value="DXP_reductoisomerase_N"/>
</dbReference>
<dbReference type="InterPro" id="IPR026877">
    <property type="entry name" value="DXPR_C"/>
</dbReference>
<dbReference type="InterPro" id="IPR036169">
    <property type="entry name" value="DXPR_C_sf"/>
</dbReference>
<dbReference type="InterPro" id="IPR036291">
    <property type="entry name" value="NAD(P)-bd_dom_sf"/>
</dbReference>
<dbReference type="NCBIfam" id="TIGR00243">
    <property type="entry name" value="Dxr"/>
    <property type="match status" value="1"/>
</dbReference>
<dbReference type="PANTHER" id="PTHR30525">
    <property type="entry name" value="1-DEOXY-D-XYLULOSE 5-PHOSPHATE REDUCTOISOMERASE"/>
    <property type="match status" value="1"/>
</dbReference>
<dbReference type="PANTHER" id="PTHR30525:SF0">
    <property type="entry name" value="1-DEOXY-D-XYLULOSE 5-PHOSPHATE REDUCTOISOMERASE, CHLOROPLASTIC"/>
    <property type="match status" value="1"/>
</dbReference>
<dbReference type="Pfam" id="PF08436">
    <property type="entry name" value="DXP_redisom_C"/>
    <property type="match status" value="1"/>
</dbReference>
<dbReference type="Pfam" id="PF02670">
    <property type="entry name" value="DXP_reductoisom"/>
    <property type="match status" value="1"/>
</dbReference>
<dbReference type="Pfam" id="PF13288">
    <property type="entry name" value="DXPR_C"/>
    <property type="match status" value="1"/>
</dbReference>
<dbReference type="PIRSF" id="PIRSF006205">
    <property type="entry name" value="Dxp_reductismrs"/>
    <property type="match status" value="1"/>
</dbReference>
<dbReference type="SUPFAM" id="SSF69055">
    <property type="entry name" value="1-deoxy-D-xylulose-5-phosphate reductoisomerase, C-terminal domain"/>
    <property type="match status" value="1"/>
</dbReference>
<dbReference type="SUPFAM" id="SSF55347">
    <property type="entry name" value="Glyceraldehyde-3-phosphate dehydrogenase-like, C-terminal domain"/>
    <property type="match status" value="1"/>
</dbReference>
<dbReference type="SUPFAM" id="SSF51735">
    <property type="entry name" value="NAD(P)-binding Rossmann-fold domains"/>
    <property type="match status" value="1"/>
</dbReference>